<dbReference type="EMBL" id="AE003849">
    <property type="protein sequence ID" value="AAF85056.1"/>
    <property type="status" value="ALT_INIT"/>
    <property type="molecule type" value="Genomic_DNA"/>
</dbReference>
<dbReference type="PIR" id="G82579">
    <property type="entry name" value="G82579"/>
</dbReference>
<dbReference type="RefSeq" id="WP_042463759.1">
    <property type="nucleotide sequence ID" value="NC_002488.3"/>
</dbReference>
<dbReference type="STRING" id="160492.XF_2257"/>
<dbReference type="KEGG" id="xfa:XF_2257"/>
<dbReference type="PATRIC" id="fig|160492.11.peg.2403"/>
<dbReference type="eggNOG" id="COG1971">
    <property type="taxonomic scope" value="Bacteria"/>
</dbReference>
<dbReference type="HOGENOM" id="CLU_096410_0_0_6"/>
<dbReference type="Proteomes" id="UP000000812">
    <property type="component" value="Chromosome"/>
</dbReference>
<dbReference type="GO" id="GO:0005886">
    <property type="term" value="C:plasma membrane"/>
    <property type="evidence" value="ECO:0007669"/>
    <property type="project" value="UniProtKB-SubCell"/>
</dbReference>
<dbReference type="GO" id="GO:0005384">
    <property type="term" value="F:manganese ion transmembrane transporter activity"/>
    <property type="evidence" value="ECO:0007669"/>
    <property type="project" value="UniProtKB-UniRule"/>
</dbReference>
<dbReference type="HAMAP" id="MF_01521">
    <property type="entry name" value="MntP_pump"/>
    <property type="match status" value="1"/>
</dbReference>
<dbReference type="InterPro" id="IPR003810">
    <property type="entry name" value="Mntp/YtaF"/>
</dbReference>
<dbReference type="InterPro" id="IPR022929">
    <property type="entry name" value="Put_MntP"/>
</dbReference>
<dbReference type="PANTHER" id="PTHR35529">
    <property type="entry name" value="MANGANESE EFFLUX PUMP MNTP-RELATED"/>
    <property type="match status" value="1"/>
</dbReference>
<dbReference type="PANTHER" id="PTHR35529:SF1">
    <property type="entry name" value="MANGANESE EFFLUX PUMP MNTP-RELATED"/>
    <property type="match status" value="1"/>
</dbReference>
<dbReference type="Pfam" id="PF02659">
    <property type="entry name" value="Mntp"/>
    <property type="match status" value="1"/>
</dbReference>
<accession>Q9PB87</accession>
<reference key="1">
    <citation type="journal article" date="2000" name="Nature">
        <title>The genome sequence of the plant pathogen Xylella fastidiosa.</title>
        <authorList>
            <person name="Simpson A.J.G."/>
            <person name="Reinach F.C."/>
            <person name="Arruda P."/>
            <person name="Abreu F.A."/>
            <person name="Acencio M."/>
            <person name="Alvarenga R."/>
            <person name="Alves L.M.C."/>
            <person name="Araya J.E."/>
            <person name="Baia G.S."/>
            <person name="Baptista C.S."/>
            <person name="Barros M.H."/>
            <person name="Bonaccorsi E.D."/>
            <person name="Bordin S."/>
            <person name="Bove J.M."/>
            <person name="Briones M.R.S."/>
            <person name="Bueno M.R.P."/>
            <person name="Camargo A.A."/>
            <person name="Camargo L.E.A."/>
            <person name="Carraro D.M."/>
            <person name="Carrer H."/>
            <person name="Colauto N.B."/>
            <person name="Colombo C."/>
            <person name="Costa F.F."/>
            <person name="Costa M.C.R."/>
            <person name="Costa-Neto C.M."/>
            <person name="Coutinho L.L."/>
            <person name="Cristofani M."/>
            <person name="Dias-Neto E."/>
            <person name="Docena C."/>
            <person name="El-Dorry H."/>
            <person name="Facincani A.P."/>
            <person name="Ferreira A.J.S."/>
            <person name="Ferreira V.C.A."/>
            <person name="Ferro J.A."/>
            <person name="Fraga J.S."/>
            <person name="Franca S.C."/>
            <person name="Franco M.C."/>
            <person name="Frohme M."/>
            <person name="Furlan L.R."/>
            <person name="Garnier M."/>
            <person name="Goldman G.H."/>
            <person name="Goldman M.H.S."/>
            <person name="Gomes S.L."/>
            <person name="Gruber A."/>
            <person name="Ho P.L."/>
            <person name="Hoheisel J.D."/>
            <person name="Junqueira M.L."/>
            <person name="Kemper E.L."/>
            <person name="Kitajima J.P."/>
            <person name="Krieger J.E."/>
            <person name="Kuramae E.E."/>
            <person name="Laigret F."/>
            <person name="Lambais M.R."/>
            <person name="Leite L.C.C."/>
            <person name="Lemos E.G.M."/>
            <person name="Lemos M.V.F."/>
            <person name="Lopes S.A."/>
            <person name="Lopes C.R."/>
            <person name="Machado J.A."/>
            <person name="Machado M.A."/>
            <person name="Madeira A.M.B.N."/>
            <person name="Madeira H.M.F."/>
            <person name="Marino C.L."/>
            <person name="Marques M.V."/>
            <person name="Martins E.A.L."/>
            <person name="Martins E.M.F."/>
            <person name="Matsukuma A.Y."/>
            <person name="Menck C.F.M."/>
            <person name="Miracca E.C."/>
            <person name="Miyaki C.Y."/>
            <person name="Monteiro-Vitorello C.B."/>
            <person name="Moon D.H."/>
            <person name="Nagai M.A."/>
            <person name="Nascimento A.L.T.O."/>
            <person name="Netto L.E.S."/>
            <person name="Nhani A. Jr."/>
            <person name="Nobrega F.G."/>
            <person name="Nunes L.R."/>
            <person name="Oliveira M.A."/>
            <person name="de Oliveira M.C."/>
            <person name="de Oliveira R.C."/>
            <person name="Palmieri D.A."/>
            <person name="Paris A."/>
            <person name="Peixoto B.R."/>
            <person name="Pereira G.A.G."/>
            <person name="Pereira H.A. Jr."/>
            <person name="Pesquero J.B."/>
            <person name="Quaggio R.B."/>
            <person name="Roberto P.G."/>
            <person name="Rodrigues V."/>
            <person name="de Rosa A.J.M."/>
            <person name="de Rosa V.E. Jr."/>
            <person name="de Sa R.G."/>
            <person name="Santelli R.V."/>
            <person name="Sawasaki H.E."/>
            <person name="da Silva A.C.R."/>
            <person name="da Silva A.M."/>
            <person name="da Silva F.R."/>
            <person name="Silva W.A. Jr."/>
            <person name="da Silveira J.F."/>
            <person name="Silvestri M.L.Z."/>
            <person name="Siqueira W.J."/>
            <person name="de Souza A.A."/>
            <person name="de Souza A.P."/>
            <person name="Terenzi M.F."/>
            <person name="Truffi D."/>
            <person name="Tsai S.M."/>
            <person name="Tsuhako M.H."/>
            <person name="Vallada H."/>
            <person name="Van Sluys M.A."/>
            <person name="Verjovski-Almeida S."/>
            <person name="Vettore A.L."/>
            <person name="Zago M.A."/>
            <person name="Zatz M."/>
            <person name="Meidanis J."/>
            <person name="Setubal J.C."/>
        </authorList>
    </citation>
    <scope>NUCLEOTIDE SEQUENCE [LARGE SCALE GENOMIC DNA]</scope>
    <source>
        <strain>9a5c</strain>
    </source>
</reference>
<gene>
    <name evidence="1" type="primary">mntP</name>
    <name type="ordered locus">XF_2257</name>
</gene>
<organism>
    <name type="scientific">Xylella fastidiosa (strain 9a5c)</name>
    <dbReference type="NCBI Taxonomy" id="160492"/>
    <lineage>
        <taxon>Bacteria</taxon>
        <taxon>Pseudomonadati</taxon>
        <taxon>Pseudomonadota</taxon>
        <taxon>Gammaproteobacteria</taxon>
        <taxon>Lysobacterales</taxon>
        <taxon>Lysobacteraceae</taxon>
        <taxon>Xylella</taxon>
    </lineage>
</organism>
<proteinExistence type="inferred from homology"/>
<name>MNTP_XYLFA</name>
<evidence type="ECO:0000255" key="1">
    <source>
        <dbReference type="HAMAP-Rule" id="MF_01521"/>
    </source>
</evidence>
<evidence type="ECO:0000305" key="2"/>
<comment type="function">
    <text evidence="1">Probably functions as a manganese efflux pump.</text>
</comment>
<comment type="subcellular location">
    <subcellularLocation>
        <location evidence="1">Cell inner membrane</location>
        <topology evidence="1">Multi-pass membrane protein</topology>
    </subcellularLocation>
</comment>
<comment type="similarity">
    <text evidence="1">Belongs to the MntP (TC 9.B.29) family.</text>
</comment>
<comment type="sequence caution" evidence="2">
    <conflict type="erroneous initiation">
        <sequence resource="EMBL-CDS" id="AAF85056"/>
    </conflict>
</comment>
<feature type="chain" id="PRO_0000155673" description="Putative manganese efflux pump MntP">
    <location>
        <begin position="1"/>
        <end position="194"/>
    </location>
</feature>
<feature type="transmembrane region" description="Helical" evidence="1">
    <location>
        <begin position="3"/>
        <end position="23"/>
    </location>
</feature>
<feature type="transmembrane region" description="Helical" evidence="1">
    <location>
        <begin position="37"/>
        <end position="57"/>
    </location>
</feature>
<feature type="transmembrane region" description="Helical" evidence="1">
    <location>
        <begin position="65"/>
        <end position="85"/>
    </location>
</feature>
<feature type="transmembrane region" description="Helical" evidence="1">
    <location>
        <begin position="112"/>
        <end position="132"/>
    </location>
</feature>
<feature type="transmembrane region" description="Helical" evidence="1">
    <location>
        <begin position="139"/>
        <end position="159"/>
    </location>
</feature>
<feature type="transmembrane region" description="Helical" evidence="1">
    <location>
        <begin position="170"/>
        <end position="190"/>
    </location>
</feature>
<protein>
    <recommendedName>
        <fullName evidence="1">Putative manganese efflux pump MntP</fullName>
    </recommendedName>
</protein>
<keyword id="KW-0997">Cell inner membrane</keyword>
<keyword id="KW-1003">Cell membrane</keyword>
<keyword id="KW-0406">Ion transport</keyword>
<keyword id="KW-0464">Manganese</keyword>
<keyword id="KW-0472">Membrane</keyword>
<keyword id="KW-0812">Transmembrane</keyword>
<keyword id="KW-1133">Transmembrane helix</keyword>
<keyword id="KW-0813">Transport</keyword>
<sequence>MSPITILLIGIAMSTDAFAAAIGKGAAIGKPRLRDALYVAVIFGVIETATPIAGWLLGQIASHYIATFDHWIAFGLLSGLGIHMIVNGLKNNGNTCKDNADTHNRNSRWLPLAATALATSIDAAAIGISLAFLDIHISIVAAVIGLCTFTMVIFGVMLGRVLGTFVGNRAEIVGGIILIIVGSTILYEHLSNNG</sequence>